<protein>
    <recommendedName>
        <fullName evidence="1">NADH-quinone oxidoreductase subunit D</fullName>
        <ecNumber evidence="1">7.1.1.-</ecNumber>
    </recommendedName>
    <alternativeName>
        <fullName evidence="1">NADH dehydrogenase I subunit D</fullName>
    </alternativeName>
    <alternativeName>
        <fullName evidence="1">NDH-1 subunit D</fullName>
    </alternativeName>
</protein>
<dbReference type="EC" id="7.1.1.-" evidence="1"/>
<dbReference type="EMBL" id="CP000546">
    <property type="protein sequence ID" value="ABN00890.1"/>
    <property type="molecule type" value="Genomic_DNA"/>
</dbReference>
<dbReference type="RefSeq" id="WP_004185833.1">
    <property type="nucleotide sequence ID" value="NC_008836.1"/>
</dbReference>
<dbReference type="SMR" id="A2S456"/>
<dbReference type="KEGG" id="bml:BMA10229_A0734"/>
<dbReference type="HOGENOM" id="CLU_015134_1_1_4"/>
<dbReference type="Proteomes" id="UP000002283">
    <property type="component" value="Chromosome I"/>
</dbReference>
<dbReference type="GO" id="GO:0005886">
    <property type="term" value="C:plasma membrane"/>
    <property type="evidence" value="ECO:0007669"/>
    <property type="project" value="UniProtKB-SubCell"/>
</dbReference>
<dbReference type="GO" id="GO:0051287">
    <property type="term" value="F:NAD binding"/>
    <property type="evidence" value="ECO:0007669"/>
    <property type="project" value="InterPro"/>
</dbReference>
<dbReference type="GO" id="GO:0050136">
    <property type="term" value="F:NADH:ubiquinone reductase (non-electrogenic) activity"/>
    <property type="evidence" value="ECO:0007669"/>
    <property type="project" value="UniProtKB-UniRule"/>
</dbReference>
<dbReference type="GO" id="GO:0048038">
    <property type="term" value="F:quinone binding"/>
    <property type="evidence" value="ECO:0007669"/>
    <property type="project" value="UniProtKB-KW"/>
</dbReference>
<dbReference type="FunFam" id="1.10.645.10:FF:000005">
    <property type="entry name" value="NADH-quinone oxidoreductase subunit D"/>
    <property type="match status" value="1"/>
</dbReference>
<dbReference type="Gene3D" id="1.10.645.10">
    <property type="entry name" value="Cytochrome-c3 Hydrogenase, chain B"/>
    <property type="match status" value="1"/>
</dbReference>
<dbReference type="HAMAP" id="MF_01358">
    <property type="entry name" value="NDH1_NuoD"/>
    <property type="match status" value="1"/>
</dbReference>
<dbReference type="InterPro" id="IPR001135">
    <property type="entry name" value="NADH_Q_OxRdtase_suD"/>
</dbReference>
<dbReference type="InterPro" id="IPR014029">
    <property type="entry name" value="NADH_UbQ_OxRdtase_49kDa_CS"/>
</dbReference>
<dbReference type="InterPro" id="IPR022885">
    <property type="entry name" value="NDH1_su_D/H"/>
</dbReference>
<dbReference type="InterPro" id="IPR029014">
    <property type="entry name" value="NiFe-Hase_large"/>
</dbReference>
<dbReference type="NCBIfam" id="TIGR01962">
    <property type="entry name" value="NuoD"/>
    <property type="match status" value="1"/>
</dbReference>
<dbReference type="NCBIfam" id="NF004739">
    <property type="entry name" value="PRK06075.1"/>
    <property type="match status" value="1"/>
</dbReference>
<dbReference type="PANTHER" id="PTHR11993:SF10">
    <property type="entry name" value="NADH DEHYDROGENASE [UBIQUINONE] IRON-SULFUR PROTEIN 2, MITOCHONDRIAL"/>
    <property type="match status" value="1"/>
</dbReference>
<dbReference type="PANTHER" id="PTHR11993">
    <property type="entry name" value="NADH-UBIQUINONE OXIDOREDUCTASE 49 KDA SUBUNIT"/>
    <property type="match status" value="1"/>
</dbReference>
<dbReference type="Pfam" id="PF00346">
    <property type="entry name" value="Complex1_49kDa"/>
    <property type="match status" value="1"/>
</dbReference>
<dbReference type="SUPFAM" id="SSF56762">
    <property type="entry name" value="HydB/Nqo4-like"/>
    <property type="match status" value="1"/>
</dbReference>
<dbReference type="PROSITE" id="PS00535">
    <property type="entry name" value="COMPLEX1_49K"/>
    <property type="match status" value="1"/>
</dbReference>
<reference key="1">
    <citation type="journal article" date="2010" name="Genome Biol. Evol.">
        <title>Continuing evolution of Burkholderia mallei through genome reduction and large-scale rearrangements.</title>
        <authorList>
            <person name="Losada L."/>
            <person name="Ronning C.M."/>
            <person name="DeShazer D."/>
            <person name="Woods D."/>
            <person name="Fedorova N."/>
            <person name="Kim H.S."/>
            <person name="Shabalina S.A."/>
            <person name="Pearson T.R."/>
            <person name="Brinkac L."/>
            <person name="Tan P."/>
            <person name="Nandi T."/>
            <person name="Crabtree J."/>
            <person name="Badger J."/>
            <person name="Beckstrom-Sternberg S."/>
            <person name="Saqib M."/>
            <person name="Schutzer S.E."/>
            <person name="Keim P."/>
            <person name="Nierman W.C."/>
        </authorList>
    </citation>
    <scope>NUCLEOTIDE SEQUENCE [LARGE SCALE GENOMIC DNA]</scope>
    <source>
        <strain>NCTC 10229</strain>
    </source>
</reference>
<organism>
    <name type="scientific">Burkholderia mallei (strain NCTC 10229)</name>
    <dbReference type="NCBI Taxonomy" id="412022"/>
    <lineage>
        <taxon>Bacteria</taxon>
        <taxon>Pseudomonadati</taxon>
        <taxon>Pseudomonadota</taxon>
        <taxon>Betaproteobacteria</taxon>
        <taxon>Burkholderiales</taxon>
        <taxon>Burkholderiaceae</taxon>
        <taxon>Burkholderia</taxon>
        <taxon>pseudomallei group</taxon>
    </lineage>
</organism>
<name>NUOD_BURM9</name>
<accession>A2S456</accession>
<proteinExistence type="inferred from homology"/>
<comment type="function">
    <text evidence="1">NDH-1 shuttles electrons from NADH, via FMN and iron-sulfur (Fe-S) centers, to quinones in the respiratory chain. The immediate electron acceptor for the enzyme in this species is believed to be ubiquinone. Couples the redox reaction to proton translocation (for every two electrons transferred, four hydrogen ions are translocated across the cytoplasmic membrane), and thus conserves the redox energy in a proton gradient.</text>
</comment>
<comment type="catalytic activity">
    <reaction evidence="1">
        <text>a quinone + NADH + 5 H(+)(in) = a quinol + NAD(+) + 4 H(+)(out)</text>
        <dbReference type="Rhea" id="RHEA:57888"/>
        <dbReference type="ChEBI" id="CHEBI:15378"/>
        <dbReference type="ChEBI" id="CHEBI:24646"/>
        <dbReference type="ChEBI" id="CHEBI:57540"/>
        <dbReference type="ChEBI" id="CHEBI:57945"/>
        <dbReference type="ChEBI" id="CHEBI:132124"/>
    </reaction>
</comment>
<comment type="subunit">
    <text evidence="1">NDH-1 is composed of 14 different subunits. Subunits NuoB, C, D, E, F, and G constitute the peripheral sector of the complex.</text>
</comment>
<comment type="subcellular location">
    <subcellularLocation>
        <location evidence="1">Cell inner membrane</location>
        <topology evidence="1">Peripheral membrane protein</topology>
        <orientation evidence="1">Cytoplasmic side</orientation>
    </subcellularLocation>
</comment>
<comment type="similarity">
    <text evidence="1">Belongs to the complex I 49 kDa subunit family.</text>
</comment>
<gene>
    <name evidence="1" type="primary">nuoD</name>
    <name type="ordered locus">BMA10229_A0734</name>
</gene>
<sequence length="417" mass="47507">MAEIKNYTLNFGPQHPAAHGVLRLVLELDGEVIQRADPHIGLLHRATEKLAENKTFIQSVPYMDRLDYVSMMVNEHGYVLAIEKLLGIEVPERAQYIRVLFDEITRVLNHLMWIGAHALDVGAMAVFLYAFREREDLMDVYEAVSGARMHAAYYRPGGVYRDLPEAMPQYKASKIRNERALAKMNEARSGSVLDFIDDFFTRFPKCVDEYETLLTDNRIWKQRLVGIGVVSPERALQLGLTGPMIRGSGIAWDLRKKQPYEVYDRLDFDIPVGVNGDCYDRYLVRVEEMRQSTRIAKQCIEWLRKNPGPVITDNHKVAPPSRVGMKTNMEDLIHHFKLFTEGFHVPEGETYAAVEHPKGEFGIYLVSDGANKPYRLKIRAPGYAHLSALDEMARGHMIADAVTIIGTQDIVFGEIDR</sequence>
<feature type="chain" id="PRO_0000371829" description="NADH-quinone oxidoreductase subunit D">
    <location>
        <begin position="1"/>
        <end position="417"/>
    </location>
</feature>
<keyword id="KW-0997">Cell inner membrane</keyword>
<keyword id="KW-1003">Cell membrane</keyword>
<keyword id="KW-0472">Membrane</keyword>
<keyword id="KW-0520">NAD</keyword>
<keyword id="KW-0874">Quinone</keyword>
<keyword id="KW-1278">Translocase</keyword>
<keyword id="KW-0813">Transport</keyword>
<keyword id="KW-0830">Ubiquinone</keyword>
<evidence type="ECO:0000255" key="1">
    <source>
        <dbReference type="HAMAP-Rule" id="MF_01358"/>
    </source>
</evidence>